<sequence>MAELKNDRYLRALLKQPVDVTPVWMMRQAGRYLPEYRATRAQAGDFMSLCKNAELACEVTLQPLRRYELDAAILFSDILTIPDAMGLGLYFEAGEGPRFERKADTLEAIKALPIPDPEDELGYVMRAVSTIRRELKGEVPLIGFSGSPWTLATYMVEGGSSKAFEKIKRMMYSEPMALHLLLDKLADSVILYLNAQIANGAQSVMIFDSWGGALSHSAYREFSLRYMQKIVDGLTREADGRKVPVTLFTKGGGLWLESMAETGCDALGLDWTVDIADARRRVGHKVALQGNMDPSMLYAPIPRIEEEVEQILAGFGEGTGHVFNLGHGIHQHVDPEHAGAFIKAVHEKSRKYHK</sequence>
<gene>
    <name evidence="1" type="primary">hemE</name>
    <name type="ordered locus">Sama_0387</name>
</gene>
<accession>A1S2J2</accession>
<protein>
    <recommendedName>
        <fullName evidence="1">Uroporphyrinogen decarboxylase</fullName>
        <shortName evidence="1">UPD</shortName>
        <shortName evidence="1">URO-D</shortName>
        <ecNumber evidence="1">4.1.1.37</ecNumber>
    </recommendedName>
</protein>
<proteinExistence type="inferred from homology"/>
<dbReference type="EC" id="4.1.1.37" evidence="1"/>
<dbReference type="EMBL" id="CP000507">
    <property type="protein sequence ID" value="ABL98598.1"/>
    <property type="molecule type" value="Genomic_DNA"/>
</dbReference>
<dbReference type="RefSeq" id="WP_011758508.1">
    <property type="nucleotide sequence ID" value="NC_008700.1"/>
</dbReference>
<dbReference type="SMR" id="A1S2J2"/>
<dbReference type="STRING" id="326297.Sama_0387"/>
<dbReference type="KEGG" id="saz:Sama_0387"/>
<dbReference type="eggNOG" id="COG0407">
    <property type="taxonomic scope" value="Bacteria"/>
</dbReference>
<dbReference type="HOGENOM" id="CLU_040933_0_0_6"/>
<dbReference type="OrthoDB" id="9806656at2"/>
<dbReference type="UniPathway" id="UPA00251">
    <property type="reaction ID" value="UER00321"/>
</dbReference>
<dbReference type="Proteomes" id="UP000009175">
    <property type="component" value="Chromosome"/>
</dbReference>
<dbReference type="GO" id="GO:0005829">
    <property type="term" value="C:cytosol"/>
    <property type="evidence" value="ECO:0007669"/>
    <property type="project" value="TreeGrafter"/>
</dbReference>
<dbReference type="GO" id="GO:0004853">
    <property type="term" value="F:uroporphyrinogen decarboxylase activity"/>
    <property type="evidence" value="ECO:0007669"/>
    <property type="project" value="UniProtKB-UniRule"/>
</dbReference>
<dbReference type="GO" id="GO:0019353">
    <property type="term" value="P:protoporphyrinogen IX biosynthetic process from glutamate"/>
    <property type="evidence" value="ECO:0007669"/>
    <property type="project" value="TreeGrafter"/>
</dbReference>
<dbReference type="CDD" id="cd00717">
    <property type="entry name" value="URO-D"/>
    <property type="match status" value="1"/>
</dbReference>
<dbReference type="FunFam" id="3.20.20.210:FF:000001">
    <property type="entry name" value="Uroporphyrinogen decarboxylase"/>
    <property type="match status" value="1"/>
</dbReference>
<dbReference type="Gene3D" id="3.20.20.210">
    <property type="match status" value="1"/>
</dbReference>
<dbReference type="HAMAP" id="MF_00218">
    <property type="entry name" value="URO_D"/>
    <property type="match status" value="1"/>
</dbReference>
<dbReference type="InterPro" id="IPR038071">
    <property type="entry name" value="UROD/MetE-like_sf"/>
</dbReference>
<dbReference type="InterPro" id="IPR006361">
    <property type="entry name" value="Uroporphyrinogen_deCO2ase_HemE"/>
</dbReference>
<dbReference type="InterPro" id="IPR000257">
    <property type="entry name" value="Uroporphyrinogen_deCOase"/>
</dbReference>
<dbReference type="NCBIfam" id="TIGR01464">
    <property type="entry name" value="hemE"/>
    <property type="match status" value="1"/>
</dbReference>
<dbReference type="PANTHER" id="PTHR21091">
    <property type="entry name" value="METHYLTETRAHYDROFOLATE:HOMOCYSTEINE METHYLTRANSFERASE RELATED"/>
    <property type="match status" value="1"/>
</dbReference>
<dbReference type="PANTHER" id="PTHR21091:SF169">
    <property type="entry name" value="UROPORPHYRINOGEN DECARBOXYLASE"/>
    <property type="match status" value="1"/>
</dbReference>
<dbReference type="Pfam" id="PF01208">
    <property type="entry name" value="URO-D"/>
    <property type="match status" value="1"/>
</dbReference>
<dbReference type="SUPFAM" id="SSF51726">
    <property type="entry name" value="UROD/MetE-like"/>
    <property type="match status" value="1"/>
</dbReference>
<dbReference type="PROSITE" id="PS00906">
    <property type="entry name" value="UROD_1"/>
    <property type="match status" value="1"/>
</dbReference>
<dbReference type="PROSITE" id="PS00907">
    <property type="entry name" value="UROD_2"/>
    <property type="match status" value="1"/>
</dbReference>
<organism>
    <name type="scientific">Shewanella amazonensis (strain ATCC BAA-1098 / SB2B)</name>
    <dbReference type="NCBI Taxonomy" id="326297"/>
    <lineage>
        <taxon>Bacteria</taxon>
        <taxon>Pseudomonadati</taxon>
        <taxon>Pseudomonadota</taxon>
        <taxon>Gammaproteobacteria</taxon>
        <taxon>Alteromonadales</taxon>
        <taxon>Shewanellaceae</taxon>
        <taxon>Shewanella</taxon>
    </lineage>
</organism>
<keyword id="KW-0963">Cytoplasm</keyword>
<keyword id="KW-0210">Decarboxylase</keyword>
<keyword id="KW-0456">Lyase</keyword>
<keyword id="KW-0627">Porphyrin biosynthesis</keyword>
<keyword id="KW-1185">Reference proteome</keyword>
<reference key="1">
    <citation type="submission" date="2006-12" db="EMBL/GenBank/DDBJ databases">
        <title>Complete sequence of Shewanella amazonensis SB2B.</title>
        <authorList>
            <consortium name="US DOE Joint Genome Institute"/>
            <person name="Copeland A."/>
            <person name="Lucas S."/>
            <person name="Lapidus A."/>
            <person name="Barry K."/>
            <person name="Detter J.C."/>
            <person name="Glavina del Rio T."/>
            <person name="Hammon N."/>
            <person name="Israni S."/>
            <person name="Dalin E."/>
            <person name="Tice H."/>
            <person name="Pitluck S."/>
            <person name="Munk A.C."/>
            <person name="Brettin T."/>
            <person name="Bruce D."/>
            <person name="Han C."/>
            <person name="Tapia R."/>
            <person name="Gilna P."/>
            <person name="Schmutz J."/>
            <person name="Larimer F."/>
            <person name="Land M."/>
            <person name="Hauser L."/>
            <person name="Kyrpides N."/>
            <person name="Mikhailova N."/>
            <person name="Fredrickson J."/>
            <person name="Richardson P."/>
        </authorList>
    </citation>
    <scope>NUCLEOTIDE SEQUENCE [LARGE SCALE GENOMIC DNA]</scope>
    <source>
        <strain>ATCC BAA-1098 / SB2B</strain>
    </source>
</reference>
<comment type="function">
    <text evidence="1">Catalyzes the decarboxylation of four acetate groups of uroporphyrinogen-III to yield coproporphyrinogen-III.</text>
</comment>
<comment type="catalytic activity">
    <reaction evidence="1">
        <text>uroporphyrinogen III + 4 H(+) = coproporphyrinogen III + 4 CO2</text>
        <dbReference type="Rhea" id="RHEA:19865"/>
        <dbReference type="ChEBI" id="CHEBI:15378"/>
        <dbReference type="ChEBI" id="CHEBI:16526"/>
        <dbReference type="ChEBI" id="CHEBI:57308"/>
        <dbReference type="ChEBI" id="CHEBI:57309"/>
        <dbReference type="EC" id="4.1.1.37"/>
    </reaction>
</comment>
<comment type="pathway">
    <text evidence="1">Porphyrin-containing compound metabolism; protoporphyrin-IX biosynthesis; coproporphyrinogen-III from 5-aminolevulinate: step 4/4.</text>
</comment>
<comment type="subunit">
    <text evidence="1">Homodimer.</text>
</comment>
<comment type="subcellular location">
    <subcellularLocation>
        <location evidence="1">Cytoplasm</location>
    </subcellularLocation>
</comment>
<comment type="similarity">
    <text evidence="1">Belongs to the uroporphyrinogen decarboxylase family.</text>
</comment>
<name>DCUP_SHEAM</name>
<feature type="chain" id="PRO_1000023966" description="Uroporphyrinogen decarboxylase">
    <location>
        <begin position="1"/>
        <end position="354"/>
    </location>
</feature>
<feature type="binding site" evidence="1">
    <location>
        <begin position="27"/>
        <end position="31"/>
    </location>
    <ligand>
        <name>substrate</name>
    </ligand>
</feature>
<feature type="binding site" evidence="1">
    <location>
        <position position="77"/>
    </location>
    <ligand>
        <name>substrate</name>
    </ligand>
</feature>
<feature type="binding site" evidence="1">
    <location>
        <position position="154"/>
    </location>
    <ligand>
        <name>substrate</name>
    </ligand>
</feature>
<feature type="binding site" evidence="1">
    <location>
        <position position="209"/>
    </location>
    <ligand>
        <name>substrate</name>
    </ligand>
</feature>
<feature type="binding site" evidence="1">
    <location>
        <position position="327"/>
    </location>
    <ligand>
        <name>substrate</name>
    </ligand>
</feature>
<feature type="site" description="Transition state stabilizer" evidence="1">
    <location>
        <position position="77"/>
    </location>
</feature>
<evidence type="ECO:0000255" key="1">
    <source>
        <dbReference type="HAMAP-Rule" id="MF_00218"/>
    </source>
</evidence>